<keyword id="KW-0002">3D-structure</keyword>
<keyword id="KW-0010">Activator</keyword>
<keyword id="KW-0963">Cytoplasm</keyword>
<keyword id="KW-0238">DNA-binding</keyword>
<keyword id="KW-0408">Iron</keyword>
<keyword id="KW-1185">Reference proteome</keyword>
<keyword id="KW-0678">Repressor</keyword>
<keyword id="KW-0804">Transcription</keyword>
<keyword id="KW-0805">Transcription regulation</keyword>
<accession>P9WMH1</accession>
<accession>L0TC16</accession>
<accession>O08190</accession>
<accession>P0A672</accession>
<accession>Q50495</accession>
<gene>
    <name type="primary">ideR</name>
    <name type="synonym">dtxR</name>
    <name type="ordered locus">Rv2711</name>
    <name type="ORF">MTCY05A6.32</name>
</gene>
<protein>
    <recommendedName>
        <fullName>Iron-dependent repressor IdeR</fullName>
    </recommendedName>
</protein>
<feature type="chain" id="PRO_0000201108" description="Iron-dependent repressor IdeR">
    <location>
        <begin position="1"/>
        <end position="230"/>
    </location>
</feature>
<feature type="domain" description="HTH dtxR-type" evidence="1">
    <location>
        <begin position="4"/>
        <end position="65"/>
    </location>
</feature>
<feature type="strand" evidence="7">
    <location>
        <begin position="3"/>
        <end position="6"/>
    </location>
</feature>
<feature type="helix" evidence="8">
    <location>
        <begin position="7"/>
        <end position="20"/>
    </location>
</feature>
<feature type="helix" evidence="8">
    <location>
        <begin position="27"/>
        <end position="34"/>
    </location>
</feature>
<feature type="helix" evidence="8">
    <location>
        <begin position="38"/>
        <end position="50"/>
    </location>
</feature>
<feature type="strand" evidence="8">
    <location>
        <begin position="53"/>
        <end position="56"/>
    </location>
</feature>
<feature type="strand" evidence="8">
    <location>
        <begin position="62"/>
        <end position="64"/>
    </location>
</feature>
<feature type="helix" evidence="8">
    <location>
        <begin position="66"/>
        <end position="88"/>
    </location>
</feature>
<feature type="helix" evidence="8">
    <location>
        <begin position="94"/>
        <end position="104"/>
    </location>
</feature>
<feature type="turn" evidence="8">
    <location>
        <begin position="105"/>
        <end position="107"/>
    </location>
</feature>
<feature type="helix" evidence="8">
    <location>
        <begin position="110"/>
        <end position="119"/>
    </location>
</feature>
<feature type="helix" evidence="8">
    <location>
        <begin position="135"/>
        <end position="138"/>
    </location>
</feature>
<feature type="helix" evidence="6">
    <location>
        <begin position="154"/>
        <end position="156"/>
    </location>
</feature>
<feature type="strand" evidence="6">
    <location>
        <begin position="159"/>
        <end position="161"/>
    </location>
</feature>
<feature type="strand" evidence="6">
    <location>
        <begin position="163"/>
        <end position="170"/>
    </location>
</feature>
<feature type="helix" evidence="6">
    <location>
        <begin position="172"/>
        <end position="175"/>
    </location>
</feature>
<feature type="helix" evidence="6">
    <location>
        <begin position="178"/>
        <end position="186"/>
    </location>
</feature>
<feature type="strand" evidence="7">
    <location>
        <begin position="190"/>
        <end position="192"/>
    </location>
</feature>
<feature type="strand" evidence="6">
    <location>
        <begin position="194"/>
        <end position="199"/>
    </location>
</feature>
<feature type="strand" evidence="6">
    <location>
        <begin position="205"/>
        <end position="208"/>
    </location>
</feature>
<feature type="strand" evidence="6">
    <location>
        <begin position="215"/>
        <end position="217"/>
    </location>
</feature>
<feature type="helix" evidence="6">
    <location>
        <begin position="219"/>
        <end position="222"/>
    </location>
</feature>
<feature type="strand" evidence="6">
    <location>
        <begin position="225"/>
        <end position="229"/>
    </location>
</feature>
<dbReference type="EMBL" id="U14191">
    <property type="protein sequence ID" value="AAA86057.1"/>
    <property type="molecule type" value="Genomic_DNA"/>
</dbReference>
<dbReference type="EMBL" id="AL123456">
    <property type="protein sequence ID" value="CCP45509.1"/>
    <property type="molecule type" value="Genomic_DNA"/>
</dbReference>
<dbReference type="PIR" id="B70532">
    <property type="entry name" value="B70532"/>
</dbReference>
<dbReference type="RefSeq" id="NP_217227.1">
    <property type="nucleotide sequence ID" value="NC_000962.3"/>
</dbReference>
<dbReference type="RefSeq" id="WP_003413962.1">
    <property type="nucleotide sequence ID" value="NZ_NVQJ01000017.1"/>
</dbReference>
<dbReference type="PDB" id="1B1B">
    <property type="method" value="X-ray"/>
    <property type="resolution" value="2.60 A"/>
    <property type="chains" value="A=1-140"/>
</dbReference>
<dbReference type="PDB" id="1FX7">
    <property type="method" value="X-ray"/>
    <property type="resolution" value="2.00 A"/>
    <property type="chains" value="A/B/C/D=1-230"/>
</dbReference>
<dbReference type="PDB" id="1U8R">
    <property type="method" value="X-ray"/>
    <property type="resolution" value="2.75 A"/>
    <property type="chains" value="A/B/C/D/G/H/I/J=1-230"/>
</dbReference>
<dbReference type="PDB" id="2ISY">
    <property type="method" value="X-ray"/>
    <property type="resolution" value="1.96 A"/>
    <property type="chains" value="A/B=1-140"/>
</dbReference>
<dbReference type="PDB" id="2ISZ">
    <property type="method" value="X-ray"/>
    <property type="resolution" value="2.40 A"/>
    <property type="chains" value="A/B/C/D=1-140"/>
</dbReference>
<dbReference type="PDB" id="2IT0">
    <property type="method" value="X-ray"/>
    <property type="resolution" value="2.60 A"/>
    <property type="chains" value="A/B/C/D=1-140"/>
</dbReference>
<dbReference type="PDBsum" id="1B1B"/>
<dbReference type="PDBsum" id="1FX7"/>
<dbReference type="PDBsum" id="1U8R"/>
<dbReference type="PDBsum" id="2ISY"/>
<dbReference type="PDBsum" id="2ISZ"/>
<dbReference type="PDBsum" id="2IT0"/>
<dbReference type="SMR" id="P9WMH1"/>
<dbReference type="STRING" id="83332.Rv2711"/>
<dbReference type="PaxDb" id="83332-Rv2711"/>
<dbReference type="DNASU" id="888590"/>
<dbReference type="GeneID" id="45426698"/>
<dbReference type="GeneID" id="888590"/>
<dbReference type="KEGG" id="mtu:Rv2711"/>
<dbReference type="KEGG" id="mtv:RVBD_2711"/>
<dbReference type="TubercuList" id="Rv2711"/>
<dbReference type="eggNOG" id="COG1321">
    <property type="taxonomic scope" value="Bacteria"/>
</dbReference>
<dbReference type="InParanoid" id="P9WMH1"/>
<dbReference type="OrthoDB" id="3208141at2"/>
<dbReference type="PhylomeDB" id="P9WMH1"/>
<dbReference type="EvolutionaryTrace" id="P9WMH1"/>
<dbReference type="Proteomes" id="UP000001584">
    <property type="component" value="Chromosome"/>
</dbReference>
<dbReference type="GO" id="GO:0005737">
    <property type="term" value="C:cytoplasm"/>
    <property type="evidence" value="ECO:0007669"/>
    <property type="project" value="UniProtKB-SubCell"/>
</dbReference>
<dbReference type="GO" id="GO:0009274">
    <property type="term" value="C:peptidoglycan-based cell wall"/>
    <property type="evidence" value="ECO:0007005"/>
    <property type="project" value="MTBBASE"/>
</dbReference>
<dbReference type="GO" id="GO:0005886">
    <property type="term" value="C:plasma membrane"/>
    <property type="evidence" value="ECO:0007005"/>
    <property type="project" value="MTBBASE"/>
</dbReference>
<dbReference type="GO" id="GO:0046870">
    <property type="term" value="F:cadmium ion binding"/>
    <property type="evidence" value="ECO:0000314"/>
    <property type="project" value="MTBBASE"/>
</dbReference>
<dbReference type="GO" id="GO:0050897">
    <property type="term" value="F:cobalt ion binding"/>
    <property type="evidence" value="ECO:0000314"/>
    <property type="project" value="MTBBASE"/>
</dbReference>
<dbReference type="GO" id="GO:0003677">
    <property type="term" value="F:DNA binding"/>
    <property type="evidence" value="ECO:0000314"/>
    <property type="project" value="MTBBASE"/>
</dbReference>
<dbReference type="GO" id="GO:0003700">
    <property type="term" value="F:DNA-binding transcription factor activity"/>
    <property type="evidence" value="ECO:0007669"/>
    <property type="project" value="InterPro"/>
</dbReference>
<dbReference type="GO" id="GO:0008198">
    <property type="term" value="F:ferrous iron binding"/>
    <property type="evidence" value="ECO:0000314"/>
    <property type="project" value="MTBBASE"/>
</dbReference>
<dbReference type="GO" id="GO:0005506">
    <property type="term" value="F:iron ion binding"/>
    <property type="evidence" value="ECO:0000314"/>
    <property type="project" value="MTBBASE"/>
</dbReference>
<dbReference type="GO" id="GO:0030145">
    <property type="term" value="F:manganese ion binding"/>
    <property type="evidence" value="ECO:0000314"/>
    <property type="project" value="MTBBASE"/>
</dbReference>
<dbReference type="GO" id="GO:0016151">
    <property type="term" value="F:nickel cation binding"/>
    <property type="evidence" value="ECO:0000314"/>
    <property type="project" value="MTBBASE"/>
</dbReference>
<dbReference type="GO" id="GO:0046983">
    <property type="term" value="F:protein dimerization activity"/>
    <property type="evidence" value="ECO:0007669"/>
    <property type="project" value="InterPro"/>
</dbReference>
<dbReference type="GO" id="GO:0008270">
    <property type="term" value="F:zinc ion binding"/>
    <property type="evidence" value="ECO:0000314"/>
    <property type="project" value="MTBBASE"/>
</dbReference>
<dbReference type="GO" id="GO:0019540">
    <property type="term" value="P:catechol-containing siderophore biosynthetic process"/>
    <property type="evidence" value="ECO:0000315"/>
    <property type="project" value="MTBBASE"/>
</dbReference>
<dbReference type="GO" id="GO:0045892">
    <property type="term" value="P:negative regulation of DNA-templated transcription"/>
    <property type="evidence" value="ECO:0000314"/>
    <property type="project" value="MTBBASE"/>
</dbReference>
<dbReference type="GO" id="GO:0006355">
    <property type="term" value="P:regulation of DNA-templated transcription"/>
    <property type="evidence" value="ECO:0000314"/>
    <property type="project" value="MTBBASE"/>
</dbReference>
<dbReference type="GO" id="GO:0006979">
    <property type="term" value="P:response to oxidative stress"/>
    <property type="evidence" value="ECO:0000315"/>
    <property type="project" value="MTBBASE"/>
</dbReference>
<dbReference type="FunFam" id="1.10.60.10:FF:000001">
    <property type="entry name" value="Iron dependent repressor"/>
    <property type="match status" value="1"/>
</dbReference>
<dbReference type="FunFam" id="1.10.10.10:FF:000067">
    <property type="entry name" value="Iron-dependent repressor IdeR"/>
    <property type="match status" value="1"/>
</dbReference>
<dbReference type="FunFam" id="2.30.30.90:FF:000002">
    <property type="entry name" value="Iron-dependent repressor IdeR"/>
    <property type="match status" value="1"/>
</dbReference>
<dbReference type="Gene3D" id="2.30.30.90">
    <property type="match status" value="1"/>
</dbReference>
<dbReference type="Gene3D" id="1.10.60.10">
    <property type="entry name" value="Iron dependent repressor, metal binding and dimerisation domain"/>
    <property type="match status" value="1"/>
</dbReference>
<dbReference type="Gene3D" id="1.10.10.10">
    <property type="entry name" value="Winged helix-like DNA-binding domain superfamily/Winged helix DNA-binding domain"/>
    <property type="match status" value="1"/>
</dbReference>
<dbReference type="InterPro" id="IPR040767">
    <property type="entry name" value="DtxR/IdeR_SH3"/>
</dbReference>
<dbReference type="InterPro" id="IPR050536">
    <property type="entry name" value="DtxR_MntR_Metal-Reg"/>
</dbReference>
<dbReference type="InterPro" id="IPR007167">
    <property type="entry name" value="Fe-transptr_FeoA-like"/>
</dbReference>
<dbReference type="InterPro" id="IPR001367">
    <property type="entry name" value="Fe_dep_repressor"/>
</dbReference>
<dbReference type="InterPro" id="IPR036421">
    <property type="entry name" value="Fe_dep_repressor_sf"/>
</dbReference>
<dbReference type="InterPro" id="IPR038157">
    <property type="entry name" value="FeoA_core_dom"/>
</dbReference>
<dbReference type="InterPro" id="IPR022687">
    <property type="entry name" value="HTH_DTXR"/>
</dbReference>
<dbReference type="InterPro" id="IPR022689">
    <property type="entry name" value="Iron_dep_repressor"/>
</dbReference>
<dbReference type="InterPro" id="IPR008988">
    <property type="entry name" value="Transcriptional_repressor_C"/>
</dbReference>
<dbReference type="InterPro" id="IPR036388">
    <property type="entry name" value="WH-like_DNA-bd_sf"/>
</dbReference>
<dbReference type="InterPro" id="IPR036390">
    <property type="entry name" value="WH_DNA-bd_sf"/>
</dbReference>
<dbReference type="PANTHER" id="PTHR33238">
    <property type="entry name" value="IRON (METAL) DEPENDENT REPRESSOR, DTXR FAMILY"/>
    <property type="match status" value="1"/>
</dbReference>
<dbReference type="PANTHER" id="PTHR33238:SF10">
    <property type="entry name" value="IRON-DEPENDENT REPRESSOR IDER"/>
    <property type="match status" value="1"/>
</dbReference>
<dbReference type="Pfam" id="PF18357">
    <property type="entry name" value="DtxR"/>
    <property type="match status" value="1"/>
</dbReference>
<dbReference type="Pfam" id="PF02742">
    <property type="entry name" value="Fe_dep_repr_C"/>
    <property type="match status" value="1"/>
</dbReference>
<dbReference type="Pfam" id="PF01325">
    <property type="entry name" value="Fe_dep_repress"/>
    <property type="match status" value="1"/>
</dbReference>
<dbReference type="SMART" id="SM00899">
    <property type="entry name" value="FeoA"/>
    <property type="match status" value="1"/>
</dbReference>
<dbReference type="SMART" id="SM00529">
    <property type="entry name" value="HTH_DTXR"/>
    <property type="match status" value="1"/>
</dbReference>
<dbReference type="SUPFAM" id="SSF50037">
    <property type="entry name" value="C-terminal domain of transcriptional repressors"/>
    <property type="match status" value="1"/>
</dbReference>
<dbReference type="SUPFAM" id="SSF47979">
    <property type="entry name" value="Iron-dependent repressor protein, dimerization domain"/>
    <property type="match status" value="1"/>
</dbReference>
<dbReference type="SUPFAM" id="SSF46785">
    <property type="entry name" value="Winged helix' DNA-binding domain"/>
    <property type="match status" value="1"/>
</dbReference>
<dbReference type="PROSITE" id="PS50944">
    <property type="entry name" value="HTH_DTXR"/>
    <property type="match status" value="1"/>
</dbReference>
<reference key="1">
    <citation type="journal article" date="1995" name="Gene">
        <title>Genomic organization of the mycobacterial sigma gene cluster.</title>
        <authorList>
            <person name="Doukhan L."/>
            <person name="Predich M."/>
            <person name="Nair G."/>
            <person name="Dussurget O."/>
            <person name="Mandic-Mulec I."/>
            <person name="Cole S.T."/>
            <person name="Smith D.R."/>
            <person name="Smith I."/>
        </authorList>
    </citation>
    <scope>NUCLEOTIDE SEQUENCE [GENOMIC DNA]</scope>
    <source>
        <strain>ATCC 25618 / H37Rv</strain>
    </source>
</reference>
<reference key="2">
    <citation type="journal article" date="1998" name="Nature">
        <title>Deciphering the biology of Mycobacterium tuberculosis from the complete genome sequence.</title>
        <authorList>
            <person name="Cole S.T."/>
            <person name="Brosch R."/>
            <person name="Parkhill J."/>
            <person name="Garnier T."/>
            <person name="Churcher C.M."/>
            <person name="Harris D.E."/>
            <person name="Gordon S.V."/>
            <person name="Eiglmeier K."/>
            <person name="Gas S."/>
            <person name="Barry C.E. III"/>
            <person name="Tekaia F."/>
            <person name="Badcock K."/>
            <person name="Basham D."/>
            <person name="Brown D."/>
            <person name="Chillingworth T."/>
            <person name="Connor R."/>
            <person name="Davies R.M."/>
            <person name="Devlin K."/>
            <person name="Feltwell T."/>
            <person name="Gentles S."/>
            <person name="Hamlin N."/>
            <person name="Holroyd S."/>
            <person name="Hornsby T."/>
            <person name="Jagels K."/>
            <person name="Krogh A."/>
            <person name="McLean J."/>
            <person name="Moule S."/>
            <person name="Murphy L.D."/>
            <person name="Oliver S."/>
            <person name="Osborne J."/>
            <person name="Quail M.A."/>
            <person name="Rajandream M.A."/>
            <person name="Rogers J."/>
            <person name="Rutter S."/>
            <person name="Seeger K."/>
            <person name="Skelton S."/>
            <person name="Squares S."/>
            <person name="Squares R."/>
            <person name="Sulston J.E."/>
            <person name="Taylor K."/>
            <person name="Whitehead S."/>
            <person name="Barrell B.G."/>
        </authorList>
    </citation>
    <scope>NUCLEOTIDE SEQUENCE [LARGE SCALE GENOMIC DNA]</scope>
    <source>
        <strain>ATCC 25618 / H37Rv</strain>
    </source>
</reference>
<reference key="3">
    <citation type="journal article" date="2001" name="Mol. Microbiol.">
        <title>The Mycobacterium tuberculosis IdeR is a dual functional regulator that controls transcription of genes involved in iron acquisition, iron storage and survival in macrophages.</title>
        <authorList>
            <person name="Gold B."/>
            <person name="Rodriguez G.M."/>
            <person name="Marras S.A.E."/>
            <person name="Pentecost M."/>
            <person name="Smith I."/>
        </authorList>
    </citation>
    <scope>FUNCTION</scope>
    <scope>DNA-BINDING</scope>
    <source>
        <strain>ATCC 25618 / H37Rv</strain>
    </source>
</reference>
<reference key="4">
    <citation type="journal article" date="2002" name="Infect. Immun.">
        <title>IdeR, an essential gene in Mycobacterium tuberculosis: role of IdeR in iron-dependent gene expression, iron metabolism, and oxidative stress response.</title>
        <authorList>
            <person name="Rodriguez G.M."/>
            <person name="Voskuil M.I."/>
            <person name="Gold B."/>
            <person name="Schoolnik G.K."/>
            <person name="Smith I."/>
        </authorList>
    </citation>
    <scope>FUNCTION</scope>
    <source>
        <strain>ATCC 25618 / H37Rv</strain>
    </source>
</reference>
<reference key="5">
    <citation type="journal article" date="2011" name="Mol. Cell. Proteomics">
        <title>Proteogenomic analysis of Mycobacterium tuberculosis by high resolution mass spectrometry.</title>
        <authorList>
            <person name="Kelkar D.S."/>
            <person name="Kumar D."/>
            <person name="Kumar P."/>
            <person name="Balakrishnan L."/>
            <person name="Muthusamy B."/>
            <person name="Yadav A.K."/>
            <person name="Shrivastava P."/>
            <person name="Marimuthu A."/>
            <person name="Anand S."/>
            <person name="Sundaram H."/>
            <person name="Kingsbury R."/>
            <person name="Harsha H.C."/>
            <person name="Nair B."/>
            <person name="Prasad T.S."/>
            <person name="Chauhan D.S."/>
            <person name="Katoch K."/>
            <person name="Katoch V.M."/>
            <person name="Kumar P."/>
            <person name="Chaerkady R."/>
            <person name="Ramachandran S."/>
            <person name="Dash D."/>
            <person name="Pandey A."/>
        </authorList>
    </citation>
    <scope>IDENTIFICATION BY MASS SPECTROMETRY [LARGE SCALE ANALYSIS]</scope>
    <source>
        <strain>ATCC 25618 / H37Rv</strain>
    </source>
</reference>
<reference key="6">
    <citation type="journal article" date="1999" name="J. Mol. Biol.">
        <title>Crystal structure of the iron-dependent regulator (IdeR) from Mycobacterium tuberculosis shows both metal binding sites fully occupied.</title>
        <authorList>
            <person name="Pohl E."/>
            <person name="Holmes R.K."/>
            <person name="Hol W.G.J."/>
        </authorList>
    </citation>
    <scope>X-RAY CRYSTALLOGRAPHY (2.6 ANGSTROMS) OF 1-140</scope>
    <scope>SUBUNIT</scope>
</reference>
<organism>
    <name type="scientific">Mycobacterium tuberculosis (strain ATCC 25618 / H37Rv)</name>
    <dbReference type="NCBI Taxonomy" id="83332"/>
    <lineage>
        <taxon>Bacteria</taxon>
        <taxon>Bacillati</taxon>
        <taxon>Actinomycetota</taxon>
        <taxon>Actinomycetes</taxon>
        <taxon>Mycobacteriales</taxon>
        <taxon>Mycobacteriaceae</taxon>
        <taxon>Mycobacterium</taxon>
        <taxon>Mycobacterium tuberculosis complex</taxon>
    </lineage>
</organism>
<proteinExistence type="evidence at protein level"/>
<evidence type="ECO:0000255" key="1">
    <source>
        <dbReference type="PROSITE-ProRule" id="PRU00296"/>
    </source>
</evidence>
<evidence type="ECO:0000269" key="2">
    <source>
    </source>
</evidence>
<evidence type="ECO:0000269" key="3">
    <source>
    </source>
</evidence>
<evidence type="ECO:0000269" key="4">
    <source>
    </source>
</evidence>
<evidence type="ECO:0000305" key="5"/>
<evidence type="ECO:0007829" key="6">
    <source>
        <dbReference type="PDB" id="1FX7"/>
    </source>
</evidence>
<evidence type="ECO:0007829" key="7">
    <source>
        <dbReference type="PDB" id="1U8R"/>
    </source>
</evidence>
<evidence type="ECO:0007829" key="8">
    <source>
        <dbReference type="PDB" id="2ISY"/>
    </source>
</evidence>
<name>IDER_MYCTU</name>
<comment type="function">
    <text evidence="2 3">Metal-dependent DNA-binding protein that controls transcription of many genes involved in iron metabolism. Acts as a repressor of siderophore biosynthesis and as a positive modulator of iron storage. Also regulates expression of transporters, proteins involved in siderophore synthesis, iron storage and transcriptional regulators.</text>
</comment>
<comment type="subunit">
    <text evidence="4">Homodimer.</text>
</comment>
<comment type="subcellular location">
    <subcellularLocation>
        <location>Cytoplasm</location>
    </subcellularLocation>
</comment>
<comment type="similarity">
    <text evidence="5">Belongs to the DtxR/MntR family.</text>
</comment>
<sequence>MNELVDTTEMYLRTIYDLEEEGVTPLRARIAERLDQSGPTVSQTVSRMERDGLLRVAGDRHLELTEKGRALAIAVMRKHRLAERLLVDVIGLPWEEVHAEACRWEHVMSEDVERRLVKVLNNPTTSPFGNPIPGLVELGVGPEPGADDANLVRLTELPAGSPVAVVVRQLTEHVQGDIDLITRLKDAGVVPNARVTVETTPGGGVTIVIPGHENVTLPHEMAHAVKVEKV</sequence>